<name>MIAA_DICTD</name>
<keyword id="KW-0067">ATP-binding</keyword>
<keyword id="KW-0460">Magnesium</keyword>
<keyword id="KW-0547">Nucleotide-binding</keyword>
<keyword id="KW-1185">Reference proteome</keyword>
<keyword id="KW-0808">Transferase</keyword>
<keyword id="KW-0819">tRNA processing</keyword>
<sequence length="326" mass="38554">MKIPLAVILGPTGTGKTKLSLELAKYLPVEIVSVDSMQIYQGMDIGTAKPSLEDREKVPHHLIDIVLPDYFFTVAEFRERALKVIEEIYARRRFPLLVGGTPLYYKVLFGEFSIPHVPPDLEFRRKMKELAEKEGEYKLYEELKKIDPKTASKIHPRDLKRIIRALEVYYKVGKPISELAGEKKEDRFYISKIGLYMPRDLHYRILEERVDKMIEQGLVDEVRNLYLKGINENFVSMQGIGYKEILRYLRGELTLEESINLIKKRTKEFVKRQYTWFKKYKDIHWFDVSQYSLSQLAKLVYNTIINDWENQGYKYQNREGVNYFND</sequence>
<protein>
    <recommendedName>
        <fullName evidence="1">tRNA dimethylallyltransferase</fullName>
        <ecNumber evidence="1">2.5.1.75</ecNumber>
    </recommendedName>
    <alternativeName>
        <fullName evidence="1">Dimethylallyl diphosphate:tRNA dimethylallyltransferase</fullName>
        <shortName evidence="1">DMAPP:tRNA dimethylallyltransferase</shortName>
        <shortName evidence="1">DMATase</shortName>
    </alternativeName>
    <alternativeName>
        <fullName evidence="1">Isopentenyl-diphosphate:tRNA isopentenyltransferase</fullName>
        <shortName evidence="1">IPP transferase</shortName>
        <shortName evidence="1">IPPT</shortName>
        <shortName evidence="1">IPTase</shortName>
    </alternativeName>
</protein>
<evidence type="ECO:0000255" key="1">
    <source>
        <dbReference type="HAMAP-Rule" id="MF_00185"/>
    </source>
</evidence>
<reference key="1">
    <citation type="journal article" date="2016" name="Front. Microbiol.">
        <title>The complete genome sequence of hyperthermophile Dictyoglomus turgidum DSM 6724 reveals a specialized carbohydrate fermentor.</title>
        <authorList>
            <person name="Brumm P.J."/>
            <person name="Gowda K."/>
            <person name="Robb F.T."/>
            <person name="Mead D.A."/>
        </authorList>
    </citation>
    <scope>NUCLEOTIDE SEQUENCE [LARGE SCALE GENOMIC DNA]</scope>
    <source>
        <strain>DSM 6724 / Z-1310</strain>
    </source>
</reference>
<proteinExistence type="inferred from homology"/>
<feature type="chain" id="PRO_1000118522" description="tRNA dimethylallyltransferase">
    <location>
        <begin position="1"/>
        <end position="326"/>
    </location>
</feature>
<feature type="region of interest" description="Interaction with substrate tRNA" evidence="1">
    <location>
        <begin position="35"/>
        <end position="38"/>
    </location>
</feature>
<feature type="binding site" evidence="1">
    <location>
        <begin position="10"/>
        <end position="17"/>
    </location>
    <ligand>
        <name>ATP</name>
        <dbReference type="ChEBI" id="CHEBI:30616"/>
    </ligand>
</feature>
<feature type="binding site" evidence="1">
    <location>
        <begin position="12"/>
        <end position="17"/>
    </location>
    <ligand>
        <name>substrate</name>
    </ligand>
</feature>
<feature type="site" description="Interaction with substrate tRNA" evidence="1">
    <location>
        <position position="101"/>
    </location>
</feature>
<feature type="site" description="Interaction with substrate tRNA" evidence="1">
    <location>
        <position position="124"/>
    </location>
</feature>
<accession>B8E281</accession>
<organism>
    <name type="scientific">Dictyoglomus turgidum (strain DSM 6724 / Z-1310)</name>
    <dbReference type="NCBI Taxonomy" id="515635"/>
    <lineage>
        <taxon>Bacteria</taxon>
        <taxon>Pseudomonadati</taxon>
        <taxon>Dictyoglomota</taxon>
        <taxon>Dictyoglomia</taxon>
        <taxon>Dictyoglomales</taxon>
        <taxon>Dictyoglomaceae</taxon>
        <taxon>Dictyoglomus</taxon>
    </lineage>
</organism>
<dbReference type="EC" id="2.5.1.75" evidence="1"/>
<dbReference type="EMBL" id="CP001251">
    <property type="protein sequence ID" value="ACK42358.1"/>
    <property type="molecule type" value="Genomic_DNA"/>
</dbReference>
<dbReference type="RefSeq" id="WP_012583441.1">
    <property type="nucleotide sequence ID" value="NC_011661.1"/>
</dbReference>
<dbReference type="RefSeq" id="YP_002352972.1">
    <property type="nucleotide sequence ID" value="NC_011661.1"/>
</dbReference>
<dbReference type="SMR" id="B8E281"/>
<dbReference type="FunCoup" id="B8E281">
    <property type="interactions" value="376"/>
</dbReference>
<dbReference type="STRING" id="515635.Dtur_1079"/>
<dbReference type="EnsemblBacteria" id="ACK42358">
    <property type="protein sequence ID" value="ACK42358"/>
    <property type="gene ID" value="Dtur_1079"/>
</dbReference>
<dbReference type="KEGG" id="dtu:Dtur_1079"/>
<dbReference type="PATRIC" id="fig|515635.4.peg.1115"/>
<dbReference type="eggNOG" id="COG0324">
    <property type="taxonomic scope" value="Bacteria"/>
</dbReference>
<dbReference type="HOGENOM" id="CLU_032616_0_1_0"/>
<dbReference type="InParanoid" id="B8E281"/>
<dbReference type="OrthoDB" id="9776390at2"/>
<dbReference type="Proteomes" id="UP000007719">
    <property type="component" value="Chromosome"/>
</dbReference>
<dbReference type="GO" id="GO:0005524">
    <property type="term" value="F:ATP binding"/>
    <property type="evidence" value="ECO:0007669"/>
    <property type="project" value="UniProtKB-UniRule"/>
</dbReference>
<dbReference type="GO" id="GO:0052381">
    <property type="term" value="F:tRNA dimethylallyltransferase activity"/>
    <property type="evidence" value="ECO:0000318"/>
    <property type="project" value="GO_Central"/>
</dbReference>
<dbReference type="GO" id="GO:0006400">
    <property type="term" value="P:tRNA modification"/>
    <property type="evidence" value="ECO:0000318"/>
    <property type="project" value="GO_Central"/>
</dbReference>
<dbReference type="FunFam" id="1.10.20.140:FF:000001">
    <property type="entry name" value="tRNA dimethylallyltransferase"/>
    <property type="match status" value="1"/>
</dbReference>
<dbReference type="Gene3D" id="1.10.20.140">
    <property type="match status" value="1"/>
</dbReference>
<dbReference type="Gene3D" id="3.40.50.300">
    <property type="entry name" value="P-loop containing nucleotide triphosphate hydrolases"/>
    <property type="match status" value="1"/>
</dbReference>
<dbReference type="HAMAP" id="MF_00185">
    <property type="entry name" value="IPP_trans"/>
    <property type="match status" value="1"/>
</dbReference>
<dbReference type="InterPro" id="IPR039657">
    <property type="entry name" value="Dimethylallyltransferase"/>
</dbReference>
<dbReference type="InterPro" id="IPR018022">
    <property type="entry name" value="IPT"/>
</dbReference>
<dbReference type="InterPro" id="IPR027417">
    <property type="entry name" value="P-loop_NTPase"/>
</dbReference>
<dbReference type="NCBIfam" id="TIGR00174">
    <property type="entry name" value="miaA"/>
    <property type="match status" value="1"/>
</dbReference>
<dbReference type="PANTHER" id="PTHR11088">
    <property type="entry name" value="TRNA DIMETHYLALLYLTRANSFERASE"/>
    <property type="match status" value="1"/>
</dbReference>
<dbReference type="PANTHER" id="PTHR11088:SF60">
    <property type="entry name" value="TRNA DIMETHYLALLYLTRANSFERASE"/>
    <property type="match status" value="1"/>
</dbReference>
<dbReference type="Pfam" id="PF01715">
    <property type="entry name" value="IPPT"/>
    <property type="match status" value="1"/>
</dbReference>
<dbReference type="SUPFAM" id="SSF52540">
    <property type="entry name" value="P-loop containing nucleoside triphosphate hydrolases"/>
    <property type="match status" value="2"/>
</dbReference>
<gene>
    <name evidence="1" type="primary">miaA</name>
    <name type="ordered locus">Dtur_1079</name>
</gene>
<comment type="function">
    <text evidence="1">Catalyzes the transfer of a dimethylallyl group onto the adenine at position 37 in tRNAs that read codons beginning with uridine, leading to the formation of N6-(dimethylallyl)adenosine (i(6)A).</text>
</comment>
<comment type="catalytic activity">
    <reaction evidence="1">
        <text>adenosine(37) in tRNA + dimethylallyl diphosphate = N(6)-dimethylallyladenosine(37) in tRNA + diphosphate</text>
        <dbReference type="Rhea" id="RHEA:26482"/>
        <dbReference type="Rhea" id="RHEA-COMP:10162"/>
        <dbReference type="Rhea" id="RHEA-COMP:10375"/>
        <dbReference type="ChEBI" id="CHEBI:33019"/>
        <dbReference type="ChEBI" id="CHEBI:57623"/>
        <dbReference type="ChEBI" id="CHEBI:74411"/>
        <dbReference type="ChEBI" id="CHEBI:74415"/>
        <dbReference type="EC" id="2.5.1.75"/>
    </reaction>
</comment>
<comment type="cofactor">
    <cofactor evidence="1">
        <name>Mg(2+)</name>
        <dbReference type="ChEBI" id="CHEBI:18420"/>
    </cofactor>
</comment>
<comment type="subunit">
    <text evidence="1">Monomer.</text>
</comment>
<comment type="similarity">
    <text evidence="1">Belongs to the IPP transferase family.</text>
</comment>